<proteinExistence type="evidence at protein level"/>
<reference key="1">
    <citation type="journal article" date="2003" name="Biochem. Biophys. Res. Commun.">
        <title>But1 and But2 proteins bind to Uba3, a catalytic subunit of E1 for neddylation, in fission yeast.</title>
        <authorList>
            <person name="Yashiroda H."/>
            <person name="Tanaka K."/>
        </authorList>
    </citation>
    <scope>NUCLEOTIDE SEQUENCE [GENOMIC DNA]</scope>
    <scope>INTERACTION WITH BUT1 AND UBA3</scope>
</reference>
<reference key="2">
    <citation type="journal article" date="2002" name="Nature">
        <title>The genome sequence of Schizosaccharomyces pombe.</title>
        <authorList>
            <person name="Wood V."/>
            <person name="Gwilliam R."/>
            <person name="Rajandream M.A."/>
            <person name="Lyne M.H."/>
            <person name="Lyne R."/>
            <person name="Stewart A."/>
            <person name="Sgouros J.G."/>
            <person name="Peat N."/>
            <person name="Hayles J."/>
            <person name="Baker S.G."/>
            <person name="Basham D."/>
            <person name="Bowman S."/>
            <person name="Brooks K."/>
            <person name="Brown D."/>
            <person name="Brown S."/>
            <person name="Chillingworth T."/>
            <person name="Churcher C.M."/>
            <person name="Collins M."/>
            <person name="Connor R."/>
            <person name="Cronin A."/>
            <person name="Davis P."/>
            <person name="Feltwell T."/>
            <person name="Fraser A."/>
            <person name="Gentles S."/>
            <person name="Goble A."/>
            <person name="Hamlin N."/>
            <person name="Harris D.E."/>
            <person name="Hidalgo J."/>
            <person name="Hodgson G."/>
            <person name="Holroyd S."/>
            <person name="Hornsby T."/>
            <person name="Howarth S."/>
            <person name="Huckle E.J."/>
            <person name="Hunt S."/>
            <person name="Jagels K."/>
            <person name="James K.D."/>
            <person name="Jones L."/>
            <person name="Jones M."/>
            <person name="Leather S."/>
            <person name="McDonald S."/>
            <person name="McLean J."/>
            <person name="Mooney P."/>
            <person name="Moule S."/>
            <person name="Mungall K.L."/>
            <person name="Murphy L.D."/>
            <person name="Niblett D."/>
            <person name="Odell C."/>
            <person name="Oliver K."/>
            <person name="O'Neil S."/>
            <person name="Pearson D."/>
            <person name="Quail M.A."/>
            <person name="Rabbinowitsch E."/>
            <person name="Rutherford K.M."/>
            <person name="Rutter S."/>
            <person name="Saunders D."/>
            <person name="Seeger K."/>
            <person name="Sharp S."/>
            <person name="Skelton J."/>
            <person name="Simmonds M.N."/>
            <person name="Squares R."/>
            <person name="Squares S."/>
            <person name="Stevens K."/>
            <person name="Taylor K."/>
            <person name="Taylor R.G."/>
            <person name="Tivey A."/>
            <person name="Walsh S.V."/>
            <person name="Warren T."/>
            <person name="Whitehead S."/>
            <person name="Woodward J.R."/>
            <person name="Volckaert G."/>
            <person name="Aert R."/>
            <person name="Robben J."/>
            <person name="Grymonprez B."/>
            <person name="Weltjens I."/>
            <person name="Vanstreels E."/>
            <person name="Rieger M."/>
            <person name="Schaefer M."/>
            <person name="Mueller-Auer S."/>
            <person name="Gabel C."/>
            <person name="Fuchs M."/>
            <person name="Duesterhoeft A."/>
            <person name="Fritzc C."/>
            <person name="Holzer E."/>
            <person name="Moestl D."/>
            <person name="Hilbert H."/>
            <person name="Borzym K."/>
            <person name="Langer I."/>
            <person name="Beck A."/>
            <person name="Lehrach H."/>
            <person name="Reinhardt R."/>
            <person name="Pohl T.M."/>
            <person name="Eger P."/>
            <person name="Zimmermann W."/>
            <person name="Wedler H."/>
            <person name="Wambutt R."/>
            <person name="Purnelle B."/>
            <person name="Goffeau A."/>
            <person name="Cadieu E."/>
            <person name="Dreano S."/>
            <person name="Gloux S."/>
            <person name="Lelaure V."/>
            <person name="Mottier S."/>
            <person name="Galibert F."/>
            <person name="Aves S.J."/>
            <person name="Xiang Z."/>
            <person name="Hunt C."/>
            <person name="Moore K."/>
            <person name="Hurst S.M."/>
            <person name="Lucas M."/>
            <person name="Rochet M."/>
            <person name="Gaillardin C."/>
            <person name="Tallada V.A."/>
            <person name="Garzon A."/>
            <person name="Thode G."/>
            <person name="Daga R.R."/>
            <person name="Cruzado L."/>
            <person name="Jimenez J."/>
            <person name="Sanchez M."/>
            <person name="del Rey F."/>
            <person name="Benito J."/>
            <person name="Dominguez A."/>
            <person name="Revuelta J.L."/>
            <person name="Moreno S."/>
            <person name="Armstrong J."/>
            <person name="Forsburg S.L."/>
            <person name="Cerutti L."/>
            <person name="Lowe T."/>
            <person name="McCombie W.R."/>
            <person name="Paulsen I."/>
            <person name="Potashkin J."/>
            <person name="Shpakovski G.V."/>
            <person name="Ussery D."/>
            <person name="Barrell B.G."/>
            <person name="Nurse P."/>
        </authorList>
    </citation>
    <scope>NUCLEOTIDE SEQUENCE [LARGE SCALE GENOMIC DNA]</scope>
    <source>
        <strain>972 / ATCC 24843</strain>
    </source>
</reference>
<protein>
    <recommendedName>
        <fullName>Uba3-binding protein but2</fullName>
    </recommendedName>
</protein>
<feature type="chain" id="PRO_0000065026" description="Uba3-binding protein but2">
    <location>
        <begin position="1"/>
        <end position="390"/>
    </location>
</feature>
<name>BUT2_SCHPO</name>
<dbReference type="EMBL" id="BR000028">
    <property type="protein sequence ID" value="FAA00002.1"/>
    <property type="molecule type" value="Genomic_DNA"/>
</dbReference>
<dbReference type="EMBL" id="CU329671">
    <property type="protein sequence ID" value="CAB09122.1"/>
    <property type="molecule type" value="Genomic_DNA"/>
</dbReference>
<dbReference type="PIR" id="T40361">
    <property type="entry name" value="T40361"/>
</dbReference>
<dbReference type="RefSeq" id="NP_595513.1">
    <property type="nucleotide sequence ID" value="NM_001021422.2"/>
</dbReference>
<dbReference type="BioGRID" id="277476">
    <property type="interactions" value="32"/>
</dbReference>
<dbReference type="DIP" id="DIP-59119N"/>
<dbReference type="FunCoup" id="P87167">
    <property type="interactions" value="15"/>
</dbReference>
<dbReference type="IntAct" id="P87167">
    <property type="interactions" value="1"/>
</dbReference>
<dbReference type="STRING" id="284812.P87167"/>
<dbReference type="iPTMnet" id="P87167"/>
<dbReference type="PaxDb" id="4896-SPBC3D6.02.1"/>
<dbReference type="EnsemblFungi" id="SPBC3D6.02.1">
    <property type="protein sequence ID" value="SPBC3D6.02.1:pep"/>
    <property type="gene ID" value="SPBC3D6.02"/>
</dbReference>
<dbReference type="GeneID" id="2540960"/>
<dbReference type="KEGG" id="spo:2540960"/>
<dbReference type="PomBase" id="SPBC3D6.02">
    <property type="gene designation" value="but2"/>
</dbReference>
<dbReference type="VEuPathDB" id="FungiDB:SPBC3D6.02"/>
<dbReference type="HOGENOM" id="CLU_696685_0_0_1"/>
<dbReference type="InParanoid" id="P87167"/>
<dbReference type="OMA" id="GHSHTYE"/>
<dbReference type="PRO" id="PR:P87167"/>
<dbReference type="Proteomes" id="UP000002485">
    <property type="component" value="Chromosome II"/>
</dbReference>
<dbReference type="InterPro" id="IPR018620">
    <property type="entry name" value="Ubiquitin3-bd_protein_But2_C"/>
</dbReference>
<dbReference type="PANTHER" id="PTHR39613">
    <property type="entry name" value="ANCHORED CELL WALL PROTEIN, PUTATIVE (AFU_ORTHOLOGUE AFUA_4G08960)-RELATED"/>
    <property type="match status" value="1"/>
</dbReference>
<dbReference type="PANTHER" id="PTHR39613:SF1">
    <property type="entry name" value="ANCHORED CELL WALL PROTEIN, PUTATIVE (AFU_ORTHOLOGUE AFUA_4G08960)-RELATED"/>
    <property type="match status" value="1"/>
</dbReference>
<dbReference type="Pfam" id="PF09792">
    <property type="entry name" value="But2"/>
    <property type="match status" value="1"/>
</dbReference>
<keyword id="KW-1185">Reference proteome</keyword>
<keyword id="KW-0833">Ubl conjugation pathway</keyword>
<organism>
    <name type="scientific">Schizosaccharomyces pombe (strain 972 / ATCC 24843)</name>
    <name type="common">Fission yeast</name>
    <dbReference type="NCBI Taxonomy" id="284812"/>
    <lineage>
        <taxon>Eukaryota</taxon>
        <taxon>Fungi</taxon>
        <taxon>Dikarya</taxon>
        <taxon>Ascomycota</taxon>
        <taxon>Taphrinomycotina</taxon>
        <taxon>Schizosaccharomycetes</taxon>
        <taxon>Schizosaccharomycetales</taxon>
        <taxon>Schizosaccharomycetaceae</taxon>
        <taxon>Schizosaccharomyces</taxon>
    </lineage>
</organism>
<accession>P87167</accession>
<gene>
    <name type="primary">but2</name>
    <name type="ORF">SPBC3D6.02</name>
</gene>
<sequence>MQLLNSFLGFAASIAVLASSADAAPTLYKRKSKSNTNTAKSVAILDGVGVNNTFGVISYREKFPMDYHIWHTAPSTGKTYLQPWNDAVEPSTYYIDEGTFLRTGLKFAYIGDNMDLAFTNHTDWKASKHDDGTHRVDLSQRKPANNFMATQRCGKLDPFGYQLKRSKKVFQACGTQVFVGSGRSIDCQWMDSVALNLSRYYGNTEALSSLPLPRNLSADIPAKSSRLFPHGIYNFNFSAPNKRMQRFTASEATTVNGQNQSVYLTYDVPYGRSLYYYTSCALEFRFTNEFFPMDVTPNDGSAQFVVYNMSGNPKKQTTSSKGPTRLYEVARFNCTTRGCEYTQNIPCPRAGHSHTYELAPASPNTSISWIQSYSPRIGVTLQVYSNANFD</sequence>
<comment type="subunit">
    <text evidence="1">Interacts with but1 and uba3.</text>
</comment>
<comment type="similarity">
    <text evidence="2">Belongs to the but2 family.</text>
</comment>
<evidence type="ECO:0000269" key="1">
    <source>
    </source>
</evidence>
<evidence type="ECO:0000305" key="2"/>